<name>TAL_THET8</name>
<sequence>MELYLDTASLEEIREIAAWGVLSGVTTNPTLVAKAFAAKGEALTEEAFAAHLRAICETVGGPVSAEVTALEAEAMVAEGRRLAAIHPNIVVKLPTTEEGLKACKRLSAEGIKVNMTLIFSANQALLAARAGASYVSPFLGRVDDISWDGGELLREIVEMIQVQDLPVKVIAASIRHPRHVTEAALLGADIATMPHAVFKQLLKHPLTDIGLKRFLEDWEKVKP</sequence>
<keyword id="KW-0002">3D-structure</keyword>
<keyword id="KW-0963">Cytoplasm</keyword>
<keyword id="KW-0570">Pentose shunt</keyword>
<keyword id="KW-1185">Reference proteome</keyword>
<keyword id="KW-0704">Schiff base</keyword>
<keyword id="KW-0808">Transferase</keyword>
<comment type="function">
    <text evidence="1">Transaldolase is important for the balance of metabolites in the pentose-phosphate pathway.</text>
</comment>
<comment type="catalytic activity">
    <reaction evidence="1">
        <text>D-sedoheptulose 7-phosphate + D-glyceraldehyde 3-phosphate = D-erythrose 4-phosphate + beta-D-fructose 6-phosphate</text>
        <dbReference type="Rhea" id="RHEA:17053"/>
        <dbReference type="ChEBI" id="CHEBI:16897"/>
        <dbReference type="ChEBI" id="CHEBI:57483"/>
        <dbReference type="ChEBI" id="CHEBI:57634"/>
        <dbReference type="ChEBI" id="CHEBI:59776"/>
        <dbReference type="EC" id="2.2.1.2"/>
    </reaction>
</comment>
<comment type="pathway">
    <text evidence="1">Carbohydrate degradation; pentose phosphate pathway; D-glyceraldehyde 3-phosphate and beta-D-fructose 6-phosphate from D-ribose 5-phosphate and D-xylulose 5-phosphate (non-oxidative stage): step 2/3.</text>
</comment>
<comment type="subcellular location">
    <subcellularLocation>
        <location evidence="1">Cytoplasm</location>
    </subcellularLocation>
</comment>
<comment type="similarity">
    <text evidence="1">Belongs to the transaldolase family. Type 3B subfamily.</text>
</comment>
<accession>Q5SJE8</accession>
<gene>
    <name evidence="1" type="primary">tal</name>
    <name type="ordered locus">TTHA1066</name>
</gene>
<organism>
    <name type="scientific">Thermus thermophilus (strain ATCC 27634 / DSM 579 / HB8)</name>
    <dbReference type="NCBI Taxonomy" id="300852"/>
    <lineage>
        <taxon>Bacteria</taxon>
        <taxon>Thermotogati</taxon>
        <taxon>Deinococcota</taxon>
        <taxon>Deinococci</taxon>
        <taxon>Thermales</taxon>
        <taxon>Thermaceae</taxon>
        <taxon>Thermus</taxon>
    </lineage>
</organism>
<reference key="1">
    <citation type="submission" date="2004-11" db="EMBL/GenBank/DDBJ databases">
        <title>Complete genome sequence of Thermus thermophilus HB8.</title>
        <authorList>
            <person name="Masui R."/>
            <person name="Kurokawa K."/>
            <person name="Nakagawa N."/>
            <person name="Tokunaga F."/>
            <person name="Koyama Y."/>
            <person name="Shibata T."/>
            <person name="Oshima T."/>
            <person name="Yokoyama S."/>
            <person name="Yasunaga T."/>
            <person name="Kuramitsu S."/>
        </authorList>
    </citation>
    <scope>NUCLEOTIDE SEQUENCE [LARGE SCALE GENOMIC DNA]</scope>
    <source>
        <strain>ATCC 27634 / DSM 579 / HB8</strain>
    </source>
</reference>
<dbReference type="EC" id="2.2.1.2" evidence="1"/>
<dbReference type="EMBL" id="AP008226">
    <property type="protein sequence ID" value="BAD70889.1"/>
    <property type="molecule type" value="Genomic_DNA"/>
</dbReference>
<dbReference type="RefSeq" id="YP_144332.1">
    <property type="nucleotide sequence ID" value="NC_006461.1"/>
</dbReference>
<dbReference type="PDB" id="1WX0">
    <property type="method" value="X-ray"/>
    <property type="resolution" value="2.27 A"/>
    <property type="chains" value="A/B/C/D/E/F/G/H/I/J=1-223"/>
</dbReference>
<dbReference type="PDBsum" id="1WX0"/>
<dbReference type="SMR" id="Q5SJE8"/>
<dbReference type="EnsemblBacteria" id="BAD70889">
    <property type="protein sequence ID" value="BAD70889"/>
    <property type="gene ID" value="BAD70889"/>
</dbReference>
<dbReference type="GeneID" id="3168258"/>
<dbReference type="KEGG" id="ttj:TTHA1066"/>
<dbReference type="PATRIC" id="fig|300852.9.peg.1046"/>
<dbReference type="eggNOG" id="COG0176">
    <property type="taxonomic scope" value="Bacteria"/>
</dbReference>
<dbReference type="HOGENOM" id="CLU_079764_0_0_0"/>
<dbReference type="PhylomeDB" id="Q5SJE8"/>
<dbReference type="UniPathway" id="UPA00115">
    <property type="reaction ID" value="UER00414"/>
</dbReference>
<dbReference type="EvolutionaryTrace" id="Q5SJE8"/>
<dbReference type="Proteomes" id="UP000000532">
    <property type="component" value="Chromosome"/>
</dbReference>
<dbReference type="GO" id="GO:0005737">
    <property type="term" value="C:cytoplasm"/>
    <property type="evidence" value="ECO:0007669"/>
    <property type="project" value="UniProtKB-SubCell"/>
</dbReference>
<dbReference type="GO" id="GO:0016832">
    <property type="term" value="F:aldehyde-lyase activity"/>
    <property type="evidence" value="ECO:0007669"/>
    <property type="project" value="InterPro"/>
</dbReference>
<dbReference type="GO" id="GO:0004801">
    <property type="term" value="F:transaldolase activity"/>
    <property type="evidence" value="ECO:0007669"/>
    <property type="project" value="UniProtKB-UniRule"/>
</dbReference>
<dbReference type="GO" id="GO:0005975">
    <property type="term" value="P:carbohydrate metabolic process"/>
    <property type="evidence" value="ECO:0007669"/>
    <property type="project" value="InterPro"/>
</dbReference>
<dbReference type="GO" id="GO:0006098">
    <property type="term" value="P:pentose-phosphate shunt"/>
    <property type="evidence" value="ECO:0007669"/>
    <property type="project" value="UniProtKB-UniRule"/>
</dbReference>
<dbReference type="CDD" id="cd00956">
    <property type="entry name" value="Transaldolase_FSA"/>
    <property type="match status" value="1"/>
</dbReference>
<dbReference type="FunFam" id="3.20.20.70:FF:000018">
    <property type="entry name" value="Probable transaldolase"/>
    <property type="match status" value="1"/>
</dbReference>
<dbReference type="Gene3D" id="3.20.20.70">
    <property type="entry name" value="Aldolase class I"/>
    <property type="match status" value="1"/>
</dbReference>
<dbReference type="HAMAP" id="MF_00494">
    <property type="entry name" value="Transaldolase_3b"/>
    <property type="match status" value="1"/>
</dbReference>
<dbReference type="InterPro" id="IPR013785">
    <property type="entry name" value="Aldolase_TIM"/>
</dbReference>
<dbReference type="InterPro" id="IPR001585">
    <property type="entry name" value="TAL/FSA"/>
</dbReference>
<dbReference type="InterPro" id="IPR022999">
    <property type="entry name" value="Transaldolase_3B"/>
</dbReference>
<dbReference type="InterPro" id="IPR004731">
    <property type="entry name" value="Transaldolase_3B/F6P_aldolase"/>
</dbReference>
<dbReference type="InterPro" id="IPR018225">
    <property type="entry name" value="Transaldolase_AS"/>
</dbReference>
<dbReference type="InterPro" id="IPR033919">
    <property type="entry name" value="TSA/FSA_arc/bac"/>
</dbReference>
<dbReference type="NCBIfam" id="TIGR00875">
    <property type="entry name" value="fsa_talC_mipB"/>
    <property type="match status" value="1"/>
</dbReference>
<dbReference type="PANTHER" id="PTHR10683:SF40">
    <property type="entry name" value="FRUCTOSE-6-PHOSPHATE ALDOLASE 1-RELATED"/>
    <property type="match status" value="1"/>
</dbReference>
<dbReference type="PANTHER" id="PTHR10683">
    <property type="entry name" value="TRANSALDOLASE"/>
    <property type="match status" value="1"/>
</dbReference>
<dbReference type="Pfam" id="PF00923">
    <property type="entry name" value="TAL_FSA"/>
    <property type="match status" value="1"/>
</dbReference>
<dbReference type="SUPFAM" id="SSF51569">
    <property type="entry name" value="Aldolase"/>
    <property type="match status" value="1"/>
</dbReference>
<dbReference type="PROSITE" id="PS01054">
    <property type="entry name" value="TRANSALDOLASE_1"/>
    <property type="match status" value="1"/>
</dbReference>
<dbReference type="PROSITE" id="PS00958">
    <property type="entry name" value="TRANSALDOLASE_2"/>
    <property type="match status" value="1"/>
</dbReference>
<feature type="chain" id="PRO_1000126370" description="Probable transaldolase">
    <location>
        <begin position="1"/>
        <end position="223"/>
    </location>
</feature>
<feature type="active site" description="Schiff-base intermediate with substrate" evidence="1">
    <location>
        <position position="92"/>
    </location>
</feature>
<feature type="strand" evidence="2">
    <location>
        <begin position="2"/>
        <end position="6"/>
    </location>
</feature>
<feature type="helix" evidence="2">
    <location>
        <begin position="10"/>
        <end position="19"/>
    </location>
</feature>
<feature type="strand" evidence="2">
    <location>
        <begin position="24"/>
        <end position="26"/>
    </location>
</feature>
<feature type="helix" evidence="2">
    <location>
        <begin position="29"/>
        <end position="39"/>
    </location>
</feature>
<feature type="helix" evidence="2">
    <location>
        <begin position="45"/>
        <end position="59"/>
    </location>
</feature>
<feature type="strand" evidence="2">
    <location>
        <begin position="63"/>
        <end position="66"/>
    </location>
</feature>
<feature type="helix" evidence="2">
    <location>
        <begin position="72"/>
        <end position="85"/>
    </location>
</feature>
<feature type="strand" evidence="2">
    <location>
        <begin position="89"/>
        <end position="96"/>
    </location>
</feature>
<feature type="helix" evidence="2">
    <location>
        <begin position="97"/>
        <end position="108"/>
    </location>
</feature>
<feature type="strand" evidence="2">
    <location>
        <begin position="113"/>
        <end position="118"/>
    </location>
</feature>
<feature type="helix" evidence="2">
    <location>
        <begin position="121"/>
        <end position="129"/>
    </location>
</feature>
<feature type="strand" evidence="2">
    <location>
        <begin position="133"/>
        <end position="138"/>
    </location>
</feature>
<feature type="helix" evidence="2">
    <location>
        <begin position="139"/>
        <end position="144"/>
    </location>
</feature>
<feature type="helix" evidence="2">
    <location>
        <begin position="149"/>
        <end position="162"/>
    </location>
</feature>
<feature type="strand" evidence="2">
    <location>
        <begin position="168"/>
        <end position="172"/>
    </location>
</feature>
<feature type="helix" evidence="2">
    <location>
        <begin position="177"/>
        <end position="185"/>
    </location>
</feature>
<feature type="strand" evidence="2">
    <location>
        <begin position="189"/>
        <end position="193"/>
    </location>
</feature>
<feature type="helix" evidence="2">
    <location>
        <begin position="195"/>
        <end position="201"/>
    </location>
</feature>
<feature type="helix" evidence="2">
    <location>
        <begin position="205"/>
        <end position="210"/>
    </location>
</feature>
<evidence type="ECO:0000255" key="1">
    <source>
        <dbReference type="HAMAP-Rule" id="MF_00494"/>
    </source>
</evidence>
<evidence type="ECO:0007829" key="2">
    <source>
        <dbReference type="PDB" id="1WX0"/>
    </source>
</evidence>
<protein>
    <recommendedName>
        <fullName evidence="1">Probable transaldolase</fullName>
        <ecNumber evidence="1">2.2.1.2</ecNumber>
    </recommendedName>
</protein>
<proteinExistence type="evidence at protein level"/>